<comment type="function">
    <text evidence="1">Catalyzes the last two sequential reactions in the de novo biosynthetic pathway for UDP-N-acetylglucosamine (UDP-GlcNAc). The C-terminal domain catalyzes the transfer of acetyl group from acetyl coenzyme A to glucosamine-1-phosphate (GlcN-1-P) to produce N-acetylglucosamine-1-phosphate (GlcNAc-1-P), which is converted into UDP-GlcNAc by the transfer of uridine 5-monophosphate (from uridine 5-triphosphate), a reaction catalyzed by the N-terminal domain.</text>
</comment>
<comment type="catalytic activity">
    <reaction evidence="1">
        <text>alpha-D-glucosamine 1-phosphate + acetyl-CoA = N-acetyl-alpha-D-glucosamine 1-phosphate + CoA + H(+)</text>
        <dbReference type="Rhea" id="RHEA:13725"/>
        <dbReference type="ChEBI" id="CHEBI:15378"/>
        <dbReference type="ChEBI" id="CHEBI:57287"/>
        <dbReference type="ChEBI" id="CHEBI:57288"/>
        <dbReference type="ChEBI" id="CHEBI:57776"/>
        <dbReference type="ChEBI" id="CHEBI:58516"/>
        <dbReference type="EC" id="2.3.1.157"/>
    </reaction>
</comment>
<comment type="catalytic activity">
    <reaction evidence="1">
        <text>N-acetyl-alpha-D-glucosamine 1-phosphate + UTP + H(+) = UDP-N-acetyl-alpha-D-glucosamine + diphosphate</text>
        <dbReference type="Rhea" id="RHEA:13509"/>
        <dbReference type="ChEBI" id="CHEBI:15378"/>
        <dbReference type="ChEBI" id="CHEBI:33019"/>
        <dbReference type="ChEBI" id="CHEBI:46398"/>
        <dbReference type="ChEBI" id="CHEBI:57705"/>
        <dbReference type="ChEBI" id="CHEBI:57776"/>
        <dbReference type="EC" id="2.7.7.23"/>
    </reaction>
</comment>
<comment type="cofactor">
    <cofactor evidence="1">
        <name>Mg(2+)</name>
        <dbReference type="ChEBI" id="CHEBI:18420"/>
    </cofactor>
    <text evidence="1">Binds 1 Mg(2+) ion per subunit.</text>
</comment>
<comment type="pathway">
    <text evidence="1">Nucleotide-sugar biosynthesis; UDP-N-acetyl-alpha-D-glucosamine biosynthesis; N-acetyl-alpha-D-glucosamine 1-phosphate from alpha-D-glucosamine 6-phosphate (route II): step 2/2.</text>
</comment>
<comment type="pathway">
    <text evidence="1">Nucleotide-sugar biosynthesis; UDP-N-acetyl-alpha-D-glucosamine biosynthesis; UDP-N-acetyl-alpha-D-glucosamine from N-acetyl-alpha-D-glucosamine 1-phosphate: step 1/1.</text>
</comment>
<comment type="pathway">
    <text evidence="1">Bacterial outer membrane biogenesis; LPS lipid A biosynthesis.</text>
</comment>
<comment type="subunit">
    <text evidence="1">Homotrimer.</text>
</comment>
<comment type="subcellular location">
    <subcellularLocation>
        <location evidence="1">Cytoplasm</location>
    </subcellularLocation>
</comment>
<comment type="similarity">
    <text evidence="1">In the N-terminal section; belongs to the N-acetylglucosamine-1-phosphate uridyltransferase family.</text>
</comment>
<comment type="similarity">
    <text evidence="1">In the C-terminal section; belongs to the transferase hexapeptide repeat family.</text>
</comment>
<proteinExistence type="inferred from homology"/>
<gene>
    <name evidence="1" type="primary">glmU</name>
    <name type="ordered locus">Adeh_3958</name>
</gene>
<organism>
    <name type="scientific">Anaeromyxobacter dehalogenans (strain 2CP-C)</name>
    <dbReference type="NCBI Taxonomy" id="290397"/>
    <lineage>
        <taxon>Bacteria</taxon>
        <taxon>Pseudomonadati</taxon>
        <taxon>Myxococcota</taxon>
        <taxon>Myxococcia</taxon>
        <taxon>Myxococcales</taxon>
        <taxon>Cystobacterineae</taxon>
        <taxon>Anaeromyxobacteraceae</taxon>
        <taxon>Anaeromyxobacter</taxon>
    </lineage>
</organism>
<name>GLMU_ANADE</name>
<reference key="1">
    <citation type="submission" date="2006-01" db="EMBL/GenBank/DDBJ databases">
        <title>Complete sequence of Anaeromyxobacter dehalogenans 2CP-C.</title>
        <authorList>
            <person name="Copeland A."/>
            <person name="Lucas S."/>
            <person name="Lapidus A."/>
            <person name="Barry K."/>
            <person name="Detter J.C."/>
            <person name="Glavina T."/>
            <person name="Hammon N."/>
            <person name="Israni S."/>
            <person name="Pitluck S."/>
            <person name="Brettin T."/>
            <person name="Bruce D."/>
            <person name="Han C."/>
            <person name="Tapia R."/>
            <person name="Gilna P."/>
            <person name="Kiss H."/>
            <person name="Schmutz J."/>
            <person name="Larimer F."/>
            <person name="Land M."/>
            <person name="Kyrpides N."/>
            <person name="Anderson I."/>
            <person name="Sanford R.A."/>
            <person name="Ritalahti K.M."/>
            <person name="Thomas H.S."/>
            <person name="Kirby J.R."/>
            <person name="Zhulin I.B."/>
            <person name="Loeffler F.E."/>
            <person name="Richardson P."/>
        </authorList>
    </citation>
    <scope>NUCLEOTIDE SEQUENCE [LARGE SCALE GENOMIC DNA]</scope>
    <source>
        <strain>2CP-C</strain>
    </source>
</reference>
<dbReference type="EC" id="2.7.7.23" evidence="1"/>
<dbReference type="EC" id="2.3.1.157" evidence="1"/>
<dbReference type="EMBL" id="CP000251">
    <property type="protein sequence ID" value="ABC83722.1"/>
    <property type="molecule type" value="Genomic_DNA"/>
</dbReference>
<dbReference type="RefSeq" id="WP_011423004.1">
    <property type="nucleotide sequence ID" value="NC_007760.1"/>
</dbReference>
<dbReference type="SMR" id="Q2IGL4"/>
<dbReference type="STRING" id="290397.Adeh_3958"/>
<dbReference type="KEGG" id="ade:Adeh_3958"/>
<dbReference type="eggNOG" id="COG1207">
    <property type="taxonomic scope" value="Bacteria"/>
</dbReference>
<dbReference type="HOGENOM" id="CLU_029499_15_2_7"/>
<dbReference type="OrthoDB" id="9775031at2"/>
<dbReference type="UniPathway" id="UPA00113">
    <property type="reaction ID" value="UER00532"/>
</dbReference>
<dbReference type="UniPathway" id="UPA00113">
    <property type="reaction ID" value="UER00533"/>
</dbReference>
<dbReference type="UniPathway" id="UPA00973"/>
<dbReference type="Proteomes" id="UP000001935">
    <property type="component" value="Chromosome"/>
</dbReference>
<dbReference type="GO" id="GO:0005737">
    <property type="term" value="C:cytoplasm"/>
    <property type="evidence" value="ECO:0007669"/>
    <property type="project" value="UniProtKB-SubCell"/>
</dbReference>
<dbReference type="GO" id="GO:0016020">
    <property type="term" value="C:membrane"/>
    <property type="evidence" value="ECO:0007669"/>
    <property type="project" value="GOC"/>
</dbReference>
<dbReference type="GO" id="GO:0019134">
    <property type="term" value="F:glucosamine-1-phosphate N-acetyltransferase activity"/>
    <property type="evidence" value="ECO:0007669"/>
    <property type="project" value="UniProtKB-UniRule"/>
</dbReference>
<dbReference type="GO" id="GO:0000287">
    <property type="term" value="F:magnesium ion binding"/>
    <property type="evidence" value="ECO:0007669"/>
    <property type="project" value="UniProtKB-UniRule"/>
</dbReference>
<dbReference type="GO" id="GO:0003977">
    <property type="term" value="F:UDP-N-acetylglucosamine diphosphorylase activity"/>
    <property type="evidence" value="ECO:0007669"/>
    <property type="project" value="UniProtKB-UniRule"/>
</dbReference>
<dbReference type="GO" id="GO:0000902">
    <property type="term" value="P:cell morphogenesis"/>
    <property type="evidence" value="ECO:0007669"/>
    <property type="project" value="UniProtKB-UniRule"/>
</dbReference>
<dbReference type="GO" id="GO:0071555">
    <property type="term" value="P:cell wall organization"/>
    <property type="evidence" value="ECO:0007669"/>
    <property type="project" value="UniProtKB-KW"/>
</dbReference>
<dbReference type="GO" id="GO:0009245">
    <property type="term" value="P:lipid A biosynthetic process"/>
    <property type="evidence" value="ECO:0007669"/>
    <property type="project" value="UniProtKB-UniRule"/>
</dbReference>
<dbReference type="GO" id="GO:0009252">
    <property type="term" value="P:peptidoglycan biosynthetic process"/>
    <property type="evidence" value="ECO:0007669"/>
    <property type="project" value="UniProtKB-UniRule"/>
</dbReference>
<dbReference type="GO" id="GO:0008360">
    <property type="term" value="P:regulation of cell shape"/>
    <property type="evidence" value="ECO:0007669"/>
    <property type="project" value="UniProtKB-KW"/>
</dbReference>
<dbReference type="GO" id="GO:0006048">
    <property type="term" value="P:UDP-N-acetylglucosamine biosynthetic process"/>
    <property type="evidence" value="ECO:0007669"/>
    <property type="project" value="UniProtKB-UniPathway"/>
</dbReference>
<dbReference type="CDD" id="cd02540">
    <property type="entry name" value="GT2_GlmU_N_bac"/>
    <property type="match status" value="1"/>
</dbReference>
<dbReference type="CDD" id="cd03353">
    <property type="entry name" value="LbH_GlmU_C"/>
    <property type="match status" value="1"/>
</dbReference>
<dbReference type="Gene3D" id="2.160.10.10">
    <property type="entry name" value="Hexapeptide repeat proteins"/>
    <property type="match status" value="1"/>
</dbReference>
<dbReference type="Gene3D" id="3.90.550.10">
    <property type="entry name" value="Spore Coat Polysaccharide Biosynthesis Protein SpsA, Chain A"/>
    <property type="match status" value="1"/>
</dbReference>
<dbReference type="HAMAP" id="MF_01631">
    <property type="entry name" value="GlmU"/>
    <property type="match status" value="1"/>
</dbReference>
<dbReference type="InterPro" id="IPR005882">
    <property type="entry name" value="Bifunctional_GlmU"/>
</dbReference>
<dbReference type="InterPro" id="IPR050065">
    <property type="entry name" value="GlmU-like"/>
</dbReference>
<dbReference type="InterPro" id="IPR038009">
    <property type="entry name" value="GlmU_C_LbH"/>
</dbReference>
<dbReference type="InterPro" id="IPR001451">
    <property type="entry name" value="Hexapep"/>
</dbReference>
<dbReference type="InterPro" id="IPR018357">
    <property type="entry name" value="Hexapep_transf_CS"/>
</dbReference>
<dbReference type="InterPro" id="IPR025877">
    <property type="entry name" value="MobA-like_NTP_Trfase"/>
</dbReference>
<dbReference type="InterPro" id="IPR029044">
    <property type="entry name" value="Nucleotide-diphossugar_trans"/>
</dbReference>
<dbReference type="InterPro" id="IPR011004">
    <property type="entry name" value="Trimer_LpxA-like_sf"/>
</dbReference>
<dbReference type="NCBIfam" id="TIGR01173">
    <property type="entry name" value="glmU"/>
    <property type="match status" value="1"/>
</dbReference>
<dbReference type="PANTHER" id="PTHR43584:SF3">
    <property type="entry name" value="BIFUNCTIONAL PROTEIN GLMU"/>
    <property type="match status" value="1"/>
</dbReference>
<dbReference type="PANTHER" id="PTHR43584">
    <property type="entry name" value="NUCLEOTIDYL TRANSFERASE"/>
    <property type="match status" value="1"/>
</dbReference>
<dbReference type="Pfam" id="PF00132">
    <property type="entry name" value="Hexapep"/>
    <property type="match status" value="1"/>
</dbReference>
<dbReference type="Pfam" id="PF12804">
    <property type="entry name" value="NTP_transf_3"/>
    <property type="match status" value="1"/>
</dbReference>
<dbReference type="SUPFAM" id="SSF53448">
    <property type="entry name" value="Nucleotide-diphospho-sugar transferases"/>
    <property type="match status" value="1"/>
</dbReference>
<dbReference type="SUPFAM" id="SSF51161">
    <property type="entry name" value="Trimeric LpxA-like enzymes"/>
    <property type="match status" value="1"/>
</dbReference>
<dbReference type="PROSITE" id="PS00101">
    <property type="entry name" value="HEXAPEP_TRANSFERASES"/>
    <property type="match status" value="1"/>
</dbReference>
<protein>
    <recommendedName>
        <fullName evidence="1">Bifunctional protein GlmU</fullName>
    </recommendedName>
    <domain>
        <recommendedName>
            <fullName evidence="1">UDP-N-acetylglucosamine pyrophosphorylase</fullName>
            <ecNumber evidence="1">2.7.7.23</ecNumber>
        </recommendedName>
        <alternativeName>
            <fullName evidence="1">N-acetylglucosamine-1-phosphate uridyltransferase</fullName>
        </alternativeName>
    </domain>
    <domain>
        <recommendedName>
            <fullName evidence="1">Glucosamine-1-phosphate N-acetyltransferase</fullName>
            <ecNumber evidence="1">2.3.1.157</ecNumber>
        </recommendedName>
    </domain>
</protein>
<sequence>MPRTRTPLAAIVLAAGKGTRMKSNKAKVLHEVAGRPLAYYPVKRAVELGASPVVVVVGHQAEAVEAALSAALPEAPLRFAVQEQQLGTAHAVLAAKRALRGYRGPVLILSGDTPLLRAETLEAVVSARRRARAAVSLATMTLEAPRGYGRVVRDARGRPARIVEEKDATDAERAVREVNAGLYCVDAELLWKKLAKVGTANAQREFYLTDLVPMAAQAGGVAGVEVPAEEASGVNDRIELARANRVMVGRLAEAFMRAGVTIEDPARFDCDEGVEIGADAVIEPNVRLRGRTRVGARTRVGVGAVITDGVLADGVTVNPYTVISEAKVAEGAILGPFSRLRPGADIGPEAHVGNFVEVKKSRLGKGAKANHLAYLGDAEIGAGANIGAGTITCNYDGERKNPTRIGDGAFIGSDSILVAPIEIGAGAYVAAGSTLTDPVPAGALALGRARQVTKEGWVAQRQAEKQMKGTATGPAPARKGRPAARRAS</sequence>
<accession>Q2IGL4</accession>
<evidence type="ECO:0000255" key="1">
    <source>
        <dbReference type="HAMAP-Rule" id="MF_01631"/>
    </source>
</evidence>
<evidence type="ECO:0000256" key="2">
    <source>
        <dbReference type="SAM" id="MobiDB-lite"/>
    </source>
</evidence>
<keyword id="KW-0012">Acyltransferase</keyword>
<keyword id="KW-0133">Cell shape</keyword>
<keyword id="KW-0961">Cell wall biogenesis/degradation</keyword>
<keyword id="KW-0963">Cytoplasm</keyword>
<keyword id="KW-0460">Magnesium</keyword>
<keyword id="KW-0479">Metal-binding</keyword>
<keyword id="KW-0511">Multifunctional enzyme</keyword>
<keyword id="KW-0548">Nucleotidyltransferase</keyword>
<keyword id="KW-0573">Peptidoglycan synthesis</keyword>
<keyword id="KW-1185">Reference proteome</keyword>
<keyword id="KW-0677">Repeat</keyword>
<keyword id="KW-0808">Transferase</keyword>
<feature type="chain" id="PRO_0000244288" description="Bifunctional protein GlmU">
    <location>
        <begin position="1"/>
        <end position="488"/>
    </location>
</feature>
<feature type="region of interest" description="Pyrophosphorylase" evidence="1">
    <location>
        <begin position="1"/>
        <end position="237"/>
    </location>
</feature>
<feature type="region of interest" description="Linker" evidence="1">
    <location>
        <begin position="238"/>
        <end position="258"/>
    </location>
</feature>
<feature type="region of interest" description="N-acetyltransferase" evidence="1">
    <location>
        <begin position="259"/>
        <end position="488"/>
    </location>
</feature>
<feature type="region of interest" description="Disordered" evidence="2">
    <location>
        <begin position="459"/>
        <end position="488"/>
    </location>
</feature>
<feature type="compositionally biased region" description="Basic residues" evidence="2">
    <location>
        <begin position="478"/>
        <end position="488"/>
    </location>
</feature>
<feature type="active site" description="Proton acceptor" evidence="1">
    <location>
        <position position="371"/>
    </location>
</feature>
<feature type="binding site" evidence="1">
    <location>
        <begin position="13"/>
        <end position="16"/>
    </location>
    <ligand>
        <name>UDP-N-acetyl-alpha-D-glucosamine</name>
        <dbReference type="ChEBI" id="CHEBI:57705"/>
    </ligand>
</feature>
<feature type="binding site" evidence="1">
    <location>
        <position position="27"/>
    </location>
    <ligand>
        <name>UDP-N-acetyl-alpha-D-glucosamine</name>
        <dbReference type="ChEBI" id="CHEBI:57705"/>
    </ligand>
</feature>
<feature type="binding site" evidence="1">
    <location>
        <position position="82"/>
    </location>
    <ligand>
        <name>UDP-N-acetyl-alpha-D-glucosamine</name>
        <dbReference type="ChEBI" id="CHEBI:57705"/>
    </ligand>
</feature>
<feature type="binding site" evidence="1">
    <location>
        <begin position="87"/>
        <end position="88"/>
    </location>
    <ligand>
        <name>UDP-N-acetyl-alpha-D-glucosamine</name>
        <dbReference type="ChEBI" id="CHEBI:57705"/>
    </ligand>
</feature>
<feature type="binding site" evidence="1">
    <location>
        <begin position="110"/>
        <end position="112"/>
    </location>
    <ligand>
        <name>UDP-N-acetyl-alpha-D-glucosamine</name>
        <dbReference type="ChEBI" id="CHEBI:57705"/>
    </ligand>
</feature>
<feature type="binding site" evidence="1">
    <location>
        <position position="112"/>
    </location>
    <ligand>
        <name>Mg(2+)</name>
        <dbReference type="ChEBI" id="CHEBI:18420"/>
    </ligand>
</feature>
<feature type="binding site" evidence="1">
    <location>
        <position position="149"/>
    </location>
    <ligand>
        <name>UDP-N-acetyl-alpha-D-glucosamine</name>
        <dbReference type="ChEBI" id="CHEBI:57705"/>
    </ligand>
</feature>
<feature type="binding site" evidence="1">
    <location>
        <position position="164"/>
    </location>
    <ligand>
        <name>UDP-N-acetyl-alpha-D-glucosamine</name>
        <dbReference type="ChEBI" id="CHEBI:57705"/>
    </ligand>
</feature>
<feature type="binding site" evidence="1">
    <location>
        <position position="179"/>
    </location>
    <ligand>
        <name>UDP-N-acetyl-alpha-D-glucosamine</name>
        <dbReference type="ChEBI" id="CHEBI:57705"/>
    </ligand>
</feature>
<feature type="binding site" evidence="1">
    <location>
        <position position="235"/>
    </location>
    <ligand>
        <name>Mg(2+)</name>
        <dbReference type="ChEBI" id="CHEBI:18420"/>
    </ligand>
</feature>
<feature type="binding site" evidence="1">
    <location>
        <position position="235"/>
    </location>
    <ligand>
        <name>UDP-N-acetyl-alpha-D-glucosamine</name>
        <dbReference type="ChEBI" id="CHEBI:57705"/>
    </ligand>
</feature>
<feature type="binding site" evidence="1">
    <location>
        <position position="341"/>
    </location>
    <ligand>
        <name>UDP-N-acetyl-alpha-D-glucosamine</name>
        <dbReference type="ChEBI" id="CHEBI:57705"/>
    </ligand>
</feature>
<feature type="binding site" evidence="1">
    <location>
        <position position="359"/>
    </location>
    <ligand>
        <name>UDP-N-acetyl-alpha-D-glucosamine</name>
        <dbReference type="ChEBI" id="CHEBI:57705"/>
    </ligand>
</feature>
<feature type="binding site" evidence="1">
    <location>
        <position position="374"/>
    </location>
    <ligand>
        <name>UDP-N-acetyl-alpha-D-glucosamine</name>
        <dbReference type="ChEBI" id="CHEBI:57705"/>
    </ligand>
</feature>
<feature type="binding site" evidence="1">
    <location>
        <position position="385"/>
    </location>
    <ligand>
        <name>UDP-N-acetyl-alpha-D-glucosamine</name>
        <dbReference type="ChEBI" id="CHEBI:57705"/>
    </ligand>
</feature>
<feature type="binding site" evidence="1">
    <location>
        <position position="388"/>
    </location>
    <ligand>
        <name>acetyl-CoA</name>
        <dbReference type="ChEBI" id="CHEBI:57288"/>
    </ligand>
</feature>
<feature type="binding site" evidence="1">
    <location>
        <begin position="394"/>
        <end position="395"/>
    </location>
    <ligand>
        <name>acetyl-CoA</name>
        <dbReference type="ChEBI" id="CHEBI:57288"/>
    </ligand>
</feature>
<feature type="binding site" evidence="1">
    <location>
        <position position="413"/>
    </location>
    <ligand>
        <name>acetyl-CoA</name>
        <dbReference type="ChEBI" id="CHEBI:57288"/>
    </ligand>
</feature>
<feature type="binding site" evidence="1">
    <location>
        <position position="431"/>
    </location>
    <ligand>
        <name>acetyl-CoA</name>
        <dbReference type="ChEBI" id="CHEBI:57288"/>
    </ligand>
</feature>
<feature type="binding site" evidence="1">
    <location>
        <position position="448"/>
    </location>
    <ligand>
        <name>acetyl-CoA</name>
        <dbReference type="ChEBI" id="CHEBI:57288"/>
    </ligand>
</feature>